<protein>
    <recommendedName>
        <fullName evidence="1">Small ribosomal subunit protein bS21</fullName>
    </recommendedName>
    <alternativeName>
        <fullName evidence="3">30S ribosomal protein S21</fullName>
    </alternativeName>
</protein>
<dbReference type="EMBL" id="CP000720">
    <property type="protein sequence ID" value="ABS48627.1"/>
    <property type="molecule type" value="Genomic_DNA"/>
</dbReference>
<dbReference type="RefSeq" id="WP_001144069.1">
    <property type="nucleotide sequence ID" value="NC_009708.1"/>
</dbReference>
<dbReference type="SMR" id="A7FE70"/>
<dbReference type="GeneID" id="98390195"/>
<dbReference type="KEGG" id="ypi:YpsIP31758_0555"/>
<dbReference type="HOGENOM" id="CLU_159258_1_0_6"/>
<dbReference type="Proteomes" id="UP000002412">
    <property type="component" value="Chromosome"/>
</dbReference>
<dbReference type="GO" id="GO:1990904">
    <property type="term" value="C:ribonucleoprotein complex"/>
    <property type="evidence" value="ECO:0007669"/>
    <property type="project" value="UniProtKB-KW"/>
</dbReference>
<dbReference type="GO" id="GO:0005840">
    <property type="term" value="C:ribosome"/>
    <property type="evidence" value="ECO:0007669"/>
    <property type="project" value="UniProtKB-KW"/>
</dbReference>
<dbReference type="GO" id="GO:0003735">
    <property type="term" value="F:structural constituent of ribosome"/>
    <property type="evidence" value="ECO:0007669"/>
    <property type="project" value="InterPro"/>
</dbReference>
<dbReference type="GO" id="GO:0006412">
    <property type="term" value="P:translation"/>
    <property type="evidence" value="ECO:0007669"/>
    <property type="project" value="UniProtKB-UniRule"/>
</dbReference>
<dbReference type="FunFam" id="1.20.5.1150:FF:000001">
    <property type="entry name" value="30S ribosomal protein S21"/>
    <property type="match status" value="1"/>
</dbReference>
<dbReference type="Gene3D" id="1.20.5.1150">
    <property type="entry name" value="Ribosomal protein S8"/>
    <property type="match status" value="1"/>
</dbReference>
<dbReference type="HAMAP" id="MF_00358">
    <property type="entry name" value="Ribosomal_bS21"/>
    <property type="match status" value="1"/>
</dbReference>
<dbReference type="InterPro" id="IPR001911">
    <property type="entry name" value="Ribosomal_bS21"/>
</dbReference>
<dbReference type="InterPro" id="IPR018278">
    <property type="entry name" value="Ribosomal_bS21_CS"/>
</dbReference>
<dbReference type="InterPro" id="IPR038380">
    <property type="entry name" value="Ribosomal_bS21_sf"/>
</dbReference>
<dbReference type="NCBIfam" id="TIGR00030">
    <property type="entry name" value="S21p"/>
    <property type="match status" value="1"/>
</dbReference>
<dbReference type="PANTHER" id="PTHR21109">
    <property type="entry name" value="MITOCHONDRIAL 28S RIBOSOMAL PROTEIN S21"/>
    <property type="match status" value="1"/>
</dbReference>
<dbReference type="PANTHER" id="PTHR21109:SF22">
    <property type="entry name" value="SMALL RIBOSOMAL SUBUNIT PROTEIN BS21"/>
    <property type="match status" value="1"/>
</dbReference>
<dbReference type="Pfam" id="PF01165">
    <property type="entry name" value="Ribosomal_S21"/>
    <property type="match status" value="1"/>
</dbReference>
<dbReference type="PRINTS" id="PR00976">
    <property type="entry name" value="RIBOSOMALS21"/>
</dbReference>
<dbReference type="PROSITE" id="PS01181">
    <property type="entry name" value="RIBOSOMAL_S21"/>
    <property type="match status" value="1"/>
</dbReference>
<organism>
    <name type="scientific">Yersinia pseudotuberculosis serotype O:1b (strain IP 31758)</name>
    <dbReference type="NCBI Taxonomy" id="349747"/>
    <lineage>
        <taxon>Bacteria</taxon>
        <taxon>Pseudomonadati</taxon>
        <taxon>Pseudomonadota</taxon>
        <taxon>Gammaproteobacteria</taxon>
        <taxon>Enterobacterales</taxon>
        <taxon>Yersiniaceae</taxon>
        <taxon>Yersinia</taxon>
    </lineage>
</organism>
<sequence length="71" mass="8500">MPVIKVRENEPFDVALRRFKRSCEKAGVLAEVRRREFYEKPTTERKRAKASAVKRHAKKLARENARRTRLY</sequence>
<keyword id="KW-0687">Ribonucleoprotein</keyword>
<keyword id="KW-0689">Ribosomal protein</keyword>
<proteinExistence type="inferred from homology"/>
<accession>A7FE70</accession>
<gene>
    <name evidence="1" type="primary">rpsU</name>
    <name type="ordered locus">YpsIP31758_0555</name>
</gene>
<evidence type="ECO:0000255" key="1">
    <source>
        <dbReference type="HAMAP-Rule" id="MF_00358"/>
    </source>
</evidence>
<evidence type="ECO:0000256" key="2">
    <source>
        <dbReference type="SAM" id="MobiDB-lite"/>
    </source>
</evidence>
<evidence type="ECO:0000305" key="3"/>
<feature type="chain" id="PRO_1000059851" description="Small ribosomal subunit protein bS21">
    <location>
        <begin position="1"/>
        <end position="71"/>
    </location>
</feature>
<feature type="region of interest" description="Disordered" evidence="2">
    <location>
        <begin position="43"/>
        <end position="71"/>
    </location>
</feature>
<feature type="compositionally biased region" description="Basic residues" evidence="2">
    <location>
        <begin position="46"/>
        <end position="59"/>
    </location>
</feature>
<feature type="compositionally biased region" description="Basic and acidic residues" evidence="2">
    <location>
        <begin position="60"/>
        <end position="71"/>
    </location>
</feature>
<reference key="1">
    <citation type="journal article" date="2007" name="PLoS Genet.">
        <title>The complete genome sequence of Yersinia pseudotuberculosis IP31758, the causative agent of Far East scarlet-like fever.</title>
        <authorList>
            <person name="Eppinger M."/>
            <person name="Rosovitz M.J."/>
            <person name="Fricke W.F."/>
            <person name="Rasko D.A."/>
            <person name="Kokorina G."/>
            <person name="Fayolle C."/>
            <person name="Lindler L.E."/>
            <person name="Carniel E."/>
            <person name="Ravel J."/>
        </authorList>
    </citation>
    <scope>NUCLEOTIDE SEQUENCE [LARGE SCALE GENOMIC DNA]</scope>
    <source>
        <strain>IP 31758</strain>
    </source>
</reference>
<comment type="similarity">
    <text evidence="1">Belongs to the bacterial ribosomal protein bS21 family.</text>
</comment>
<name>RS21_YERP3</name>